<organism>
    <name type="scientific">Serratia proteamaculans (strain 568)</name>
    <dbReference type="NCBI Taxonomy" id="399741"/>
    <lineage>
        <taxon>Bacteria</taxon>
        <taxon>Pseudomonadati</taxon>
        <taxon>Pseudomonadota</taxon>
        <taxon>Gammaproteobacteria</taxon>
        <taxon>Enterobacterales</taxon>
        <taxon>Yersiniaceae</taxon>
        <taxon>Serratia</taxon>
    </lineage>
</organism>
<keyword id="KW-0687">Ribonucleoprotein</keyword>
<keyword id="KW-0689">Ribosomal protein</keyword>
<dbReference type="EMBL" id="CP000826">
    <property type="protein sequence ID" value="ABV43638.1"/>
    <property type="molecule type" value="Genomic_DNA"/>
</dbReference>
<dbReference type="SMR" id="A8GKJ8"/>
<dbReference type="STRING" id="399741.Spro_4545"/>
<dbReference type="KEGG" id="spe:Spro_4545"/>
<dbReference type="eggNOG" id="COG0051">
    <property type="taxonomic scope" value="Bacteria"/>
</dbReference>
<dbReference type="HOGENOM" id="CLU_122625_1_3_6"/>
<dbReference type="OrthoDB" id="9804464at2"/>
<dbReference type="GO" id="GO:1990904">
    <property type="term" value="C:ribonucleoprotein complex"/>
    <property type="evidence" value="ECO:0007669"/>
    <property type="project" value="UniProtKB-KW"/>
</dbReference>
<dbReference type="GO" id="GO:0005840">
    <property type="term" value="C:ribosome"/>
    <property type="evidence" value="ECO:0007669"/>
    <property type="project" value="UniProtKB-KW"/>
</dbReference>
<dbReference type="GO" id="GO:0003735">
    <property type="term" value="F:structural constituent of ribosome"/>
    <property type="evidence" value="ECO:0007669"/>
    <property type="project" value="InterPro"/>
</dbReference>
<dbReference type="GO" id="GO:0000049">
    <property type="term" value="F:tRNA binding"/>
    <property type="evidence" value="ECO:0007669"/>
    <property type="project" value="UniProtKB-UniRule"/>
</dbReference>
<dbReference type="GO" id="GO:0006412">
    <property type="term" value="P:translation"/>
    <property type="evidence" value="ECO:0007669"/>
    <property type="project" value="UniProtKB-UniRule"/>
</dbReference>
<dbReference type="FunFam" id="3.30.70.600:FF:000001">
    <property type="entry name" value="30S ribosomal protein S10"/>
    <property type="match status" value="1"/>
</dbReference>
<dbReference type="Gene3D" id="3.30.70.600">
    <property type="entry name" value="Ribosomal protein S10 domain"/>
    <property type="match status" value="1"/>
</dbReference>
<dbReference type="HAMAP" id="MF_00508">
    <property type="entry name" value="Ribosomal_uS10"/>
    <property type="match status" value="1"/>
</dbReference>
<dbReference type="InterPro" id="IPR001848">
    <property type="entry name" value="Ribosomal_uS10"/>
</dbReference>
<dbReference type="InterPro" id="IPR018268">
    <property type="entry name" value="Ribosomal_uS10_CS"/>
</dbReference>
<dbReference type="InterPro" id="IPR027486">
    <property type="entry name" value="Ribosomal_uS10_dom"/>
</dbReference>
<dbReference type="InterPro" id="IPR036838">
    <property type="entry name" value="Ribosomal_uS10_dom_sf"/>
</dbReference>
<dbReference type="NCBIfam" id="NF001861">
    <property type="entry name" value="PRK00596.1"/>
    <property type="match status" value="1"/>
</dbReference>
<dbReference type="NCBIfam" id="TIGR01049">
    <property type="entry name" value="rpsJ_bact"/>
    <property type="match status" value="1"/>
</dbReference>
<dbReference type="PANTHER" id="PTHR11700">
    <property type="entry name" value="30S RIBOSOMAL PROTEIN S10 FAMILY MEMBER"/>
    <property type="match status" value="1"/>
</dbReference>
<dbReference type="Pfam" id="PF00338">
    <property type="entry name" value="Ribosomal_S10"/>
    <property type="match status" value="1"/>
</dbReference>
<dbReference type="PRINTS" id="PR00971">
    <property type="entry name" value="RIBOSOMALS10"/>
</dbReference>
<dbReference type="SMART" id="SM01403">
    <property type="entry name" value="Ribosomal_S10"/>
    <property type="match status" value="1"/>
</dbReference>
<dbReference type="SUPFAM" id="SSF54999">
    <property type="entry name" value="Ribosomal protein S10"/>
    <property type="match status" value="1"/>
</dbReference>
<dbReference type="PROSITE" id="PS00361">
    <property type="entry name" value="RIBOSOMAL_S10"/>
    <property type="match status" value="1"/>
</dbReference>
<accession>A8GKJ8</accession>
<protein>
    <recommendedName>
        <fullName evidence="1">Small ribosomal subunit protein uS10</fullName>
    </recommendedName>
    <alternativeName>
        <fullName evidence="2">30S ribosomal protein S10</fullName>
    </alternativeName>
</protein>
<reference key="1">
    <citation type="submission" date="2007-09" db="EMBL/GenBank/DDBJ databases">
        <title>Complete sequence of chromosome of Serratia proteamaculans 568.</title>
        <authorList>
            <consortium name="US DOE Joint Genome Institute"/>
            <person name="Copeland A."/>
            <person name="Lucas S."/>
            <person name="Lapidus A."/>
            <person name="Barry K."/>
            <person name="Glavina del Rio T."/>
            <person name="Dalin E."/>
            <person name="Tice H."/>
            <person name="Pitluck S."/>
            <person name="Chain P."/>
            <person name="Malfatti S."/>
            <person name="Shin M."/>
            <person name="Vergez L."/>
            <person name="Schmutz J."/>
            <person name="Larimer F."/>
            <person name="Land M."/>
            <person name="Hauser L."/>
            <person name="Kyrpides N."/>
            <person name="Kim E."/>
            <person name="Taghavi S."/>
            <person name="Newman L."/>
            <person name="Vangronsveld J."/>
            <person name="van der Lelie D."/>
            <person name="Richardson P."/>
        </authorList>
    </citation>
    <scope>NUCLEOTIDE SEQUENCE [LARGE SCALE GENOMIC DNA]</scope>
    <source>
        <strain>568</strain>
    </source>
</reference>
<name>RS10_SERP5</name>
<comment type="function">
    <text evidence="1">Involved in the binding of tRNA to the ribosomes.</text>
</comment>
<comment type="subunit">
    <text evidence="1">Part of the 30S ribosomal subunit.</text>
</comment>
<comment type="similarity">
    <text evidence="1">Belongs to the universal ribosomal protein uS10 family.</text>
</comment>
<sequence length="103" mass="11767">MQNQRIRIRLKAFDHRLIDQSTAEIVETAKRTGAQVRGPIPLPTRKERFTVLISPHVNKDARDQYEIRTHKRLVDIVEPTEKTVDALMRLDLAAGVDVQISLG</sequence>
<feature type="chain" id="PRO_1000060862" description="Small ribosomal subunit protein uS10">
    <location>
        <begin position="1"/>
        <end position="103"/>
    </location>
</feature>
<gene>
    <name evidence="1" type="primary">rpsJ</name>
    <name type="ordered locus">Spro_4545</name>
</gene>
<evidence type="ECO:0000255" key="1">
    <source>
        <dbReference type="HAMAP-Rule" id="MF_00508"/>
    </source>
</evidence>
<evidence type="ECO:0000305" key="2"/>
<proteinExistence type="inferred from homology"/>